<name>AB1K1_ARATH</name>
<sequence length="682" mass="76757">MESIHCNSLLNPNFSLNQRRRRINHAVLNRRDALLRSLNAVELRRSRTFSAVRTSNFSVTAAATDVGGRNSTDASVMTTAMSGVERGVRVGKSSSALEQLDIERGVCVPFRKYSPETVRSKVLESRGAVVSLVSRGVEIVWTLGLYWSTLTYDFLVGRDEEVVPFRARQLRNLLCNLGPSFIKAGQVLANRPDIIREDYMNELCILQDDVPPFPNEVAFNIIEEELGQPLENIFSKISSQTIAAASLGQVYRATLRATGEDVAIKVQRPQIEPIIYRDLFLFRTLASFLNGFSLQKLGCNAELIVDEFGEKLLEELDYTLEARNIEDFLENFKDDPTVKIPGVYKNLCGPRVLVMEWIDGIRCTDPQAIKDAGIDLNGFLTVGVSAALRQLLEFGLFHGDPHPGNIFAMQDGRIAYVDFGNVAVLSQQNKQILIDAVVHAVNEDYGEMANDFTRLGFLAKDTDVSPIVPALEAIWQNSAGKGLADFNFRSVTGQFNKLVYDFPIRIPERFSLVIRSLLTQEGICFTLKPDFKFLEVAYPYVAKRLLTDPNPALRERLIQVLFKDGVFQWKRLENLLSLAKENVAKMSSNPNLRVKRVESKLDLTDTIKDGARLFLLDEGIRRKLILALTEDSKLHVEELVDVYRLVEDEVDIPTLAMQVVQDLPNVFRDFVLSWSNSVLSDR</sequence>
<accession>Q8RWG1</accession>
<accession>O49588</accession>
<keyword id="KW-0025">Alternative splicing</keyword>
<keyword id="KW-0067">ATP-binding</keyword>
<keyword id="KW-0150">Chloroplast</keyword>
<keyword id="KW-0418">Kinase</keyword>
<keyword id="KW-0547">Nucleotide-binding</keyword>
<keyword id="KW-0934">Plastid</keyword>
<keyword id="KW-1185">Reference proteome</keyword>
<keyword id="KW-0346">Stress response</keyword>
<keyword id="KW-0808">Transferase</keyword>
<keyword id="KW-0809">Transit peptide</keyword>
<dbReference type="EC" id="2.7.-.-" evidence="2"/>
<dbReference type="EC" id="2.7.11.1" evidence="7"/>
<dbReference type="EMBL" id="AL021633">
    <property type="protein sequence ID" value="CAA16542.1"/>
    <property type="status" value="ALT_SEQ"/>
    <property type="molecule type" value="Genomic_DNA"/>
</dbReference>
<dbReference type="EMBL" id="AL161578">
    <property type="protein sequence ID" value="CAB79857.1"/>
    <property type="status" value="ALT_SEQ"/>
    <property type="molecule type" value="Genomic_DNA"/>
</dbReference>
<dbReference type="EMBL" id="CP002687">
    <property type="protein sequence ID" value="AEE85903.1"/>
    <property type="molecule type" value="Genomic_DNA"/>
</dbReference>
<dbReference type="EMBL" id="CP002687">
    <property type="protein sequence ID" value="AEE85904.1"/>
    <property type="molecule type" value="Genomic_DNA"/>
</dbReference>
<dbReference type="EMBL" id="AY093113">
    <property type="protein sequence ID" value="AAM13112.1"/>
    <property type="molecule type" value="mRNA"/>
</dbReference>
<dbReference type="EMBL" id="BT008424">
    <property type="protein sequence ID" value="AAP37783.1"/>
    <property type="molecule type" value="mRNA"/>
</dbReference>
<dbReference type="PIR" id="T04506">
    <property type="entry name" value="T04506"/>
</dbReference>
<dbReference type="RefSeq" id="NP_001031763.1">
    <molecule id="Q8RWG1-2"/>
    <property type="nucleotide sequence ID" value="NM_001036686.1"/>
</dbReference>
<dbReference type="RefSeq" id="NP_194867.2">
    <molecule id="Q8RWG1-1"/>
    <property type="nucleotide sequence ID" value="NM_119288.3"/>
</dbReference>
<dbReference type="SMR" id="Q8RWG1"/>
<dbReference type="FunCoup" id="Q8RWG1">
    <property type="interactions" value="64"/>
</dbReference>
<dbReference type="STRING" id="3702.Q8RWG1"/>
<dbReference type="iPTMnet" id="Q8RWG1"/>
<dbReference type="PaxDb" id="3702-AT4G31390.1"/>
<dbReference type="ProteomicsDB" id="243298">
    <molecule id="Q8RWG1-1"/>
</dbReference>
<dbReference type="EnsemblPlants" id="AT4G31390.1">
    <molecule id="Q8RWG1-1"/>
    <property type="protein sequence ID" value="AT4G31390.1"/>
    <property type="gene ID" value="AT4G31390"/>
</dbReference>
<dbReference type="EnsemblPlants" id="AT4G31390.2">
    <molecule id="Q8RWG1-2"/>
    <property type="protein sequence ID" value="AT4G31390.2"/>
    <property type="gene ID" value="AT4G31390"/>
</dbReference>
<dbReference type="GeneID" id="829266"/>
<dbReference type="Gramene" id="AT4G31390.1">
    <molecule id="Q8RWG1-1"/>
    <property type="protein sequence ID" value="AT4G31390.1"/>
    <property type="gene ID" value="AT4G31390"/>
</dbReference>
<dbReference type="Gramene" id="AT4G31390.2">
    <molecule id="Q8RWG1-2"/>
    <property type="protein sequence ID" value="AT4G31390.2"/>
    <property type="gene ID" value="AT4G31390"/>
</dbReference>
<dbReference type="KEGG" id="ath:AT4G31390"/>
<dbReference type="Araport" id="AT4G31390"/>
<dbReference type="TAIR" id="AT4G31390">
    <property type="gene designation" value="ACDO1"/>
</dbReference>
<dbReference type="eggNOG" id="KOG1235">
    <property type="taxonomic scope" value="Eukaryota"/>
</dbReference>
<dbReference type="HOGENOM" id="CLU_006533_4_2_1"/>
<dbReference type="InParanoid" id="Q8RWG1"/>
<dbReference type="PhylomeDB" id="Q8RWG1"/>
<dbReference type="PRO" id="PR:Q8RWG1"/>
<dbReference type="Proteomes" id="UP000006548">
    <property type="component" value="Chromosome 4"/>
</dbReference>
<dbReference type="ExpressionAtlas" id="Q8RWG1">
    <property type="expression patterns" value="baseline and differential"/>
</dbReference>
<dbReference type="GO" id="GO:0009507">
    <property type="term" value="C:chloroplast"/>
    <property type="evidence" value="ECO:0000314"/>
    <property type="project" value="TAIR"/>
</dbReference>
<dbReference type="GO" id="GO:0005886">
    <property type="term" value="C:plasma membrane"/>
    <property type="evidence" value="ECO:0007005"/>
    <property type="project" value="TAIR"/>
</dbReference>
<dbReference type="GO" id="GO:0010287">
    <property type="term" value="C:plastoglobule"/>
    <property type="evidence" value="ECO:0007005"/>
    <property type="project" value="TAIR"/>
</dbReference>
<dbReference type="GO" id="GO:0005524">
    <property type="term" value="F:ATP binding"/>
    <property type="evidence" value="ECO:0007669"/>
    <property type="project" value="UniProtKB-KW"/>
</dbReference>
<dbReference type="GO" id="GO:0004672">
    <property type="term" value="F:protein kinase activity"/>
    <property type="evidence" value="ECO:0000314"/>
    <property type="project" value="UniProtKB"/>
</dbReference>
<dbReference type="GO" id="GO:0106310">
    <property type="term" value="F:protein serine kinase activity"/>
    <property type="evidence" value="ECO:0007669"/>
    <property type="project" value="RHEA"/>
</dbReference>
<dbReference type="GO" id="GO:0004674">
    <property type="term" value="F:protein serine/threonine kinase activity"/>
    <property type="evidence" value="ECO:0007669"/>
    <property type="project" value="UniProtKB-EC"/>
</dbReference>
<dbReference type="GO" id="GO:0006995">
    <property type="term" value="P:cellular response to nitrogen starvation"/>
    <property type="evidence" value="ECO:0000315"/>
    <property type="project" value="UniProtKB"/>
</dbReference>
<dbReference type="GO" id="GO:0015996">
    <property type="term" value="P:chlorophyll catabolic process"/>
    <property type="evidence" value="ECO:0000315"/>
    <property type="project" value="TAIR"/>
</dbReference>
<dbReference type="GO" id="GO:0009767">
    <property type="term" value="P:photosynthetic electron transport chain"/>
    <property type="evidence" value="ECO:0000315"/>
    <property type="project" value="UniProtKB"/>
</dbReference>
<dbReference type="GO" id="GO:0080177">
    <property type="term" value="P:plastoglobule organization"/>
    <property type="evidence" value="ECO:0000315"/>
    <property type="project" value="UniProtKB"/>
</dbReference>
<dbReference type="GO" id="GO:1904143">
    <property type="term" value="P:positive regulation of carotenoid biosynthetic process"/>
    <property type="evidence" value="ECO:0000315"/>
    <property type="project" value="UniProtKB"/>
</dbReference>
<dbReference type="GO" id="GO:1902326">
    <property type="term" value="P:positive regulation of chlorophyll biosynthetic process"/>
    <property type="evidence" value="ECO:0000315"/>
    <property type="project" value="UniProtKB"/>
</dbReference>
<dbReference type="GO" id="GO:0031540">
    <property type="term" value="P:regulation of anthocyanin biosynthetic process"/>
    <property type="evidence" value="ECO:0000315"/>
    <property type="project" value="UniProtKB"/>
</dbReference>
<dbReference type="GO" id="GO:0010109">
    <property type="term" value="P:regulation of photosynthesis"/>
    <property type="evidence" value="ECO:0000315"/>
    <property type="project" value="UniProtKB"/>
</dbReference>
<dbReference type="GO" id="GO:1902171">
    <property type="term" value="P:regulation of tocopherol cyclase activity"/>
    <property type="evidence" value="ECO:0000314"/>
    <property type="project" value="UniProtKB"/>
</dbReference>
<dbReference type="GO" id="GO:0009637">
    <property type="term" value="P:response to blue light"/>
    <property type="evidence" value="ECO:0000315"/>
    <property type="project" value="UniProtKB"/>
</dbReference>
<dbReference type="GO" id="GO:1901562">
    <property type="term" value="P:response to paraquat"/>
    <property type="evidence" value="ECO:0000270"/>
    <property type="project" value="UniProtKB"/>
</dbReference>
<dbReference type="GO" id="GO:0080183">
    <property type="term" value="P:response to photooxidative stress"/>
    <property type="evidence" value="ECO:0000315"/>
    <property type="project" value="UniProtKB"/>
</dbReference>
<dbReference type="GO" id="GO:0010114">
    <property type="term" value="P:response to red light"/>
    <property type="evidence" value="ECO:0000315"/>
    <property type="project" value="UniProtKB"/>
</dbReference>
<dbReference type="GO" id="GO:0009414">
    <property type="term" value="P:response to water deprivation"/>
    <property type="evidence" value="ECO:0000315"/>
    <property type="project" value="UniProtKB"/>
</dbReference>
<dbReference type="GO" id="GO:0010027">
    <property type="term" value="P:thylakoid membrane organization"/>
    <property type="evidence" value="ECO:0000315"/>
    <property type="project" value="UniProtKB"/>
</dbReference>
<dbReference type="CDD" id="cd05121">
    <property type="entry name" value="ABC1_ADCK3-like"/>
    <property type="match status" value="1"/>
</dbReference>
<dbReference type="Gene3D" id="1.10.510.10">
    <property type="entry name" value="Transferase(Phosphotransferase) domain 1"/>
    <property type="match status" value="1"/>
</dbReference>
<dbReference type="InterPro" id="IPR004147">
    <property type="entry name" value="ABC1_dom"/>
</dbReference>
<dbReference type="InterPro" id="IPR011009">
    <property type="entry name" value="Kinase-like_dom_sf"/>
</dbReference>
<dbReference type="InterPro" id="IPR000719">
    <property type="entry name" value="Prot_kinase_dom"/>
</dbReference>
<dbReference type="InterPro" id="IPR050154">
    <property type="entry name" value="UbiB_kinase"/>
</dbReference>
<dbReference type="PANTHER" id="PTHR10566">
    <property type="entry name" value="CHAPERONE-ACTIVITY OF BC1 COMPLEX CABC1 -RELATED"/>
    <property type="match status" value="1"/>
</dbReference>
<dbReference type="PANTHER" id="PTHR10566:SF53">
    <property type="entry name" value="PROTEIN ACTIVITY OF BC1 COMPLEX KINASE 1, CHLOROPLASTIC"/>
    <property type="match status" value="1"/>
</dbReference>
<dbReference type="Pfam" id="PF03109">
    <property type="entry name" value="ABC1"/>
    <property type="match status" value="1"/>
</dbReference>
<dbReference type="SUPFAM" id="SSF56112">
    <property type="entry name" value="Protein kinase-like (PK-like)"/>
    <property type="match status" value="1"/>
</dbReference>
<dbReference type="PROSITE" id="PS50011">
    <property type="entry name" value="PROTEIN_KINASE_DOM"/>
    <property type="match status" value="1"/>
</dbReference>
<organism>
    <name type="scientific">Arabidopsis thaliana</name>
    <name type="common">Mouse-ear cress</name>
    <dbReference type="NCBI Taxonomy" id="3702"/>
    <lineage>
        <taxon>Eukaryota</taxon>
        <taxon>Viridiplantae</taxon>
        <taxon>Streptophyta</taxon>
        <taxon>Embryophyta</taxon>
        <taxon>Tracheophyta</taxon>
        <taxon>Spermatophyta</taxon>
        <taxon>Magnoliopsida</taxon>
        <taxon>eudicotyledons</taxon>
        <taxon>Gunneridae</taxon>
        <taxon>Pentapetalae</taxon>
        <taxon>rosids</taxon>
        <taxon>malvids</taxon>
        <taxon>Brassicales</taxon>
        <taxon>Brassicaceae</taxon>
        <taxon>Camelineae</taxon>
        <taxon>Arabidopsis</taxon>
    </lineage>
</organism>
<protein>
    <recommendedName>
        <fullName evidence="10">Protein ACTIVITY OF BC1 COMPLEX KINASE 1, chloroplastic</fullName>
        <shortName evidence="10">ABC1-LIKE KINASE 1</shortName>
        <ecNumber evidence="2">2.7.-.-</ecNumber>
        <ecNumber evidence="7">2.7.11.1</ecNumber>
    </recommendedName>
    <alternativeName>
        <fullName evidence="9">Protein ABC1-LIKE KINASE RELATED TO CHLOROPHYLL DEGRADATION AND OXIDATIVE STRESS 1</fullName>
        <shortName evidence="9">AtACDO1</shortName>
    </alternativeName>
    <alternativeName>
        <fullName evidence="12">Protein BLEACHING AND DWARF IN RED LIGHT 1</fullName>
    </alternativeName>
    <alternativeName>
        <fullName evidence="11">Protein PROTON GRADIENT REGULATION 6</fullName>
    </alternativeName>
</protein>
<proteinExistence type="evidence at protein level"/>
<gene>
    <name evidence="10" type="primary">ABC1K1</name>
    <name evidence="9" type="synonym">ACDO1</name>
    <name evidence="12" type="synonym">BDR1</name>
    <name evidence="11" type="synonym">PGR6</name>
    <name evidence="14" type="ordered locus">At4g31390</name>
    <name evidence="15" type="ORF">F3L17.6</name>
</gene>
<reference key="1">
    <citation type="journal article" date="1999" name="Nature">
        <title>Sequence and analysis of chromosome 4 of the plant Arabidopsis thaliana.</title>
        <authorList>
            <person name="Mayer K.F.X."/>
            <person name="Schueller C."/>
            <person name="Wambutt R."/>
            <person name="Murphy G."/>
            <person name="Volckaert G."/>
            <person name="Pohl T."/>
            <person name="Duesterhoeft A."/>
            <person name="Stiekema W."/>
            <person name="Entian K.-D."/>
            <person name="Terryn N."/>
            <person name="Harris B."/>
            <person name="Ansorge W."/>
            <person name="Brandt P."/>
            <person name="Grivell L.A."/>
            <person name="Rieger M."/>
            <person name="Weichselgartner M."/>
            <person name="de Simone V."/>
            <person name="Obermaier B."/>
            <person name="Mache R."/>
            <person name="Mueller M."/>
            <person name="Kreis M."/>
            <person name="Delseny M."/>
            <person name="Puigdomenech P."/>
            <person name="Watson M."/>
            <person name="Schmidtheini T."/>
            <person name="Reichert B."/>
            <person name="Portetelle D."/>
            <person name="Perez-Alonso M."/>
            <person name="Boutry M."/>
            <person name="Bancroft I."/>
            <person name="Vos P."/>
            <person name="Hoheisel J."/>
            <person name="Zimmermann W."/>
            <person name="Wedler H."/>
            <person name="Ridley P."/>
            <person name="Langham S.-A."/>
            <person name="McCullagh B."/>
            <person name="Bilham L."/>
            <person name="Robben J."/>
            <person name="van der Schueren J."/>
            <person name="Grymonprez B."/>
            <person name="Chuang Y.-J."/>
            <person name="Vandenbussche F."/>
            <person name="Braeken M."/>
            <person name="Weltjens I."/>
            <person name="Voet M."/>
            <person name="Bastiaens I."/>
            <person name="Aert R."/>
            <person name="Defoor E."/>
            <person name="Weitzenegger T."/>
            <person name="Bothe G."/>
            <person name="Ramsperger U."/>
            <person name="Hilbert H."/>
            <person name="Braun M."/>
            <person name="Holzer E."/>
            <person name="Brandt A."/>
            <person name="Peters S."/>
            <person name="van Staveren M."/>
            <person name="Dirkse W."/>
            <person name="Mooijman P."/>
            <person name="Klein Lankhorst R."/>
            <person name="Rose M."/>
            <person name="Hauf J."/>
            <person name="Koetter P."/>
            <person name="Berneiser S."/>
            <person name="Hempel S."/>
            <person name="Feldpausch M."/>
            <person name="Lamberth S."/>
            <person name="Van den Daele H."/>
            <person name="De Keyser A."/>
            <person name="Buysshaert C."/>
            <person name="Gielen J."/>
            <person name="Villarroel R."/>
            <person name="De Clercq R."/>
            <person name="van Montagu M."/>
            <person name="Rogers J."/>
            <person name="Cronin A."/>
            <person name="Quail M.A."/>
            <person name="Bray-Allen S."/>
            <person name="Clark L."/>
            <person name="Doggett J."/>
            <person name="Hall S."/>
            <person name="Kay M."/>
            <person name="Lennard N."/>
            <person name="McLay K."/>
            <person name="Mayes R."/>
            <person name="Pettett A."/>
            <person name="Rajandream M.A."/>
            <person name="Lyne M."/>
            <person name="Benes V."/>
            <person name="Rechmann S."/>
            <person name="Borkova D."/>
            <person name="Bloecker H."/>
            <person name="Scharfe M."/>
            <person name="Grimm M."/>
            <person name="Loehnert T.-H."/>
            <person name="Dose S."/>
            <person name="de Haan M."/>
            <person name="Maarse A.C."/>
            <person name="Schaefer M."/>
            <person name="Mueller-Auer S."/>
            <person name="Gabel C."/>
            <person name="Fuchs M."/>
            <person name="Fartmann B."/>
            <person name="Granderath K."/>
            <person name="Dauner D."/>
            <person name="Herzl A."/>
            <person name="Neumann S."/>
            <person name="Argiriou A."/>
            <person name="Vitale D."/>
            <person name="Liguori R."/>
            <person name="Piravandi E."/>
            <person name="Massenet O."/>
            <person name="Quigley F."/>
            <person name="Clabauld G."/>
            <person name="Muendlein A."/>
            <person name="Felber R."/>
            <person name="Schnabl S."/>
            <person name="Hiller R."/>
            <person name="Schmidt W."/>
            <person name="Lecharny A."/>
            <person name="Aubourg S."/>
            <person name="Chefdor F."/>
            <person name="Cooke R."/>
            <person name="Berger C."/>
            <person name="Monfort A."/>
            <person name="Casacuberta E."/>
            <person name="Gibbons T."/>
            <person name="Weber N."/>
            <person name="Vandenbol M."/>
            <person name="Bargues M."/>
            <person name="Terol J."/>
            <person name="Torres A."/>
            <person name="Perez-Perez A."/>
            <person name="Purnelle B."/>
            <person name="Bent E."/>
            <person name="Johnson S."/>
            <person name="Tacon D."/>
            <person name="Jesse T."/>
            <person name="Heijnen L."/>
            <person name="Schwarz S."/>
            <person name="Scholler P."/>
            <person name="Heber S."/>
            <person name="Francs P."/>
            <person name="Bielke C."/>
            <person name="Frishman D."/>
            <person name="Haase D."/>
            <person name="Lemcke K."/>
            <person name="Mewes H.-W."/>
            <person name="Stocker S."/>
            <person name="Zaccaria P."/>
            <person name="Bevan M."/>
            <person name="Wilson R.K."/>
            <person name="de la Bastide M."/>
            <person name="Habermann K."/>
            <person name="Parnell L."/>
            <person name="Dedhia N."/>
            <person name="Gnoj L."/>
            <person name="Schutz K."/>
            <person name="Huang E."/>
            <person name="Spiegel L."/>
            <person name="Sekhon M."/>
            <person name="Murray J."/>
            <person name="Sheet P."/>
            <person name="Cordes M."/>
            <person name="Abu-Threideh J."/>
            <person name="Stoneking T."/>
            <person name="Kalicki J."/>
            <person name="Graves T."/>
            <person name="Harmon G."/>
            <person name="Edwards J."/>
            <person name="Latreille P."/>
            <person name="Courtney L."/>
            <person name="Cloud J."/>
            <person name="Abbott A."/>
            <person name="Scott K."/>
            <person name="Johnson D."/>
            <person name="Minx P."/>
            <person name="Bentley D."/>
            <person name="Fulton B."/>
            <person name="Miller N."/>
            <person name="Greco T."/>
            <person name="Kemp K."/>
            <person name="Kramer J."/>
            <person name="Fulton L."/>
            <person name="Mardis E."/>
            <person name="Dante M."/>
            <person name="Pepin K."/>
            <person name="Hillier L.W."/>
            <person name="Nelson J."/>
            <person name="Spieth J."/>
            <person name="Ryan E."/>
            <person name="Andrews S."/>
            <person name="Geisel C."/>
            <person name="Layman D."/>
            <person name="Du H."/>
            <person name="Ali J."/>
            <person name="Berghoff A."/>
            <person name="Jones K."/>
            <person name="Drone K."/>
            <person name="Cotton M."/>
            <person name="Joshu C."/>
            <person name="Antonoiu B."/>
            <person name="Zidanic M."/>
            <person name="Strong C."/>
            <person name="Sun H."/>
            <person name="Lamar B."/>
            <person name="Yordan C."/>
            <person name="Ma P."/>
            <person name="Zhong J."/>
            <person name="Preston R."/>
            <person name="Vil D."/>
            <person name="Shekher M."/>
            <person name="Matero A."/>
            <person name="Shah R."/>
            <person name="Swaby I.K."/>
            <person name="O'Shaughnessy A."/>
            <person name="Rodriguez M."/>
            <person name="Hoffman J."/>
            <person name="Till S."/>
            <person name="Granat S."/>
            <person name="Shohdy N."/>
            <person name="Hasegawa A."/>
            <person name="Hameed A."/>
            <person name="Lodhi M."/>
            <person name="Johnson A."/>
            <person name="Chen E."/>
            <person name="Marra M.A."/>
            <person name="Martienssen R."/>
            <person name="McCombie W.R."/>
        </authorList>
    </citation>
    <scope>NUCLEOTIDE SEQUENCE [LARGE SCALE GENOMIC DNA]</scope>
    <source>
        <strain>cv. Columbia</strain>
    </source>
</reference>
<reference key="2">
    <citation type="journal article" date="2017" name="Plant J.">
        <title>Araport11: a complete reannotation of the Arabidopsis thaliana reference genome.</title>
        <authorList>
            <person name="Cheng C.Y."/>
            <person name="Krishnakumar V."/>
            <person name="Chan A.P."/>
            <person name="Thibaud-Nissen F."/>
            <person name="Schobel S."/>
            <person name="Town C.D."/>
        </authorList>
    </citation>
    <scope>GENOME REANNOTATION</scope>
    <source>
        <strain>cv. Columbia</strain>
    </source>
</reference>
<reference key="3">
    <citation type="journal article" date="2003" name="Science">
        <title>Empirical analysis of transcriptional activity in the Arabidopsis genome.</title>
        <authorList>
            <person name="Yamada K."/>
            <person name="Lim J."/>
            <person name="Dale J.M."/>
            <person name="Chen H."/>
            <person name="Shinn P."/>
            <person name="Palm C.J."/>
            <person name="Southwick A.M."/>
            <person name="Wu H.C."/>
            <person name="Kim C.J."/>
            <person name="Nguyen M."/>
            <person name="Pham P.K."/>
            <person name="Cheuk R.F."/>
            <person name="Karlin-Newmann G."/>
            <person name="Liu S.X."/>
            <person name="Lam B."/>
            <person name="Sakano H."/>
            <person name="Wu T."/>
            <person name="Yu G."/>
            <person name="Miranda M."/>
            <person name="Quach H.L."/>
            <person name="Tripp M."/>
            <person name="Chang C.H."/>
            <person name="Lee J.M."/>
            <person name="Toriumi M.J."/>
            <person name="Chan M.M."/>
            <person name="Tang C.C."/>
            <person name="Onodera C.S."/>
            <person name="Deng J.M."/>
            <person name="Akiyama K."/>
            <person name="Ansari Y."/>
            <person name="Arakawa T."/>
            <person name="Banh J."/>
            <person name="Banno F."/>
            <person name="Bowser L."/>
            <person name="Brooks S.Y."/>
            <person name="Carninci P."/>
            <person name="Chao Q."/>
            <person name="Choy N."/>
            <person name="Enju A."/>
            <person name="Goldsmith A.D."/>
            <person name="Gurjal M."/>
            <person name="Hansen N.F."/>
            <person name="Hayashizaki Y."/>
            <person name="Johnson-Hopson C."/>
            <person name="Hsuan V.W."/>
            <person name="Iida K."/>
            <person name="Karnes M."/>
            <person name="Khan S."/>
            <person name="Koesema E."/>
            <person name="Ishida J."/>
            <person name="Jiang P.X."/>
            <person name="Jones T."/>
            <person name="Kawai J."/>
            <person name="Kamiya A."/>
            <person name="Meyers C."/>
            <person name="Nakajima M."/>
            <person name="Narusaka M."/>
            <person name="Seki M."/>
            <person name="Sakurai T."/>
            <person name="Satou M."/>
            <person name="Tamse R."/>
            <person name="Vaysberg M."/>
            <person name="Wallender E.K."/>
            <person name="Wong C."/>
            <person name="Yamamura Y."/>
            <person name="Yuan S."/>
            <person name="Shinozaki K."/>
            <person name="Davis R.W."/>
            <person name="Theologis A."/>
            <person name="Ecker J.R."/>
        </authorList>
    </citation>
    <scope>NUCLEOTIDE SEQUENCE [LARGE SCALE MRNA]</scope>
    <source>
        <strain>cv. Columbia</strain>
    </source>
</reference>
<reference key="4">
    <citation type="journal article" date="2006" name="Plant Physiol.">
        <title>Protein profiling of plastoglobules in chloroplasts and chromoplasts. A surprising site for differential accumulation of metabolic enzymes.</title>
        <authorList>
            <person name="Ytterberg A.J."/>
            <person name="Peltier J.-B."/>
            <person name="van Wijk K.J."/>
        </authorList>
    </citation>
    <scope>IDENTIFICATION BY MASS SPECTROMETRY</scope>
    <scope>SUBCELLULAR LOCATION [LARGE SCALE ANALYSIS]</scope>
    <source>
        <strain>cv. Columbia</strain>
    </source>
</reference>
<reference key="5">
    <citation type="journal article" date="2012" name="J. Exp. Bot.">
        <title>AtACDO1, an ABC1-like kinase gene, is involved in chlorophyll degradation and the response to photooxidative stress in Arabidopsis.</title>
        <authorList>
            <person name="Yang S."/>
            <person name="Zeng X."/>
            <person name="Li T."/>
            <person name="Liu M."/>
            <person name="Zhang S."/>
            <person name="Gao S."/>
            <person name="Wang Y."/>
            <person name="Peng C."/>
            <person name="Li L."/>
            <person name="Yang C."/>
        </authorList>
    </citation>
    <scope>FUNCTION</scope>
    <scope>DISRUPTION PHENOTYPE</scope>
    <scope>SUBCELLULAR LOCATION</scope>
    <scope>TISSUE SPECIFICITY</scope>
    <scope>INDUCTION BY METHYL VIOLOGEN</scope>
    <source>
        <strain>cv. Columbia</strain>
    </source>
</reference>
<reference key="6">
    <citation type="journal article" date="2012" name="Plant Physiol.">
        <title>The functional network of the Arabidopsis plastoglobule proteome based on quantitative proteomics and genome-wide coexpression analysis.</title>
        <authorList>
            <person name="Lundquist P.K."/>
            <person name="Poliakov A."/>
            <person name="Bhuiyan N.H."/>
            <person name="Zybailov B."/>
            <person name="Sun Q."/>
            <person name="van Wijk K.J."/>
        </authorList>
    </citation>
    <scope>IDENTIFICATION BY MASS SPECTROMETRY</scope>
    <scope>SUBCELLULAR LOCATION [LARGE SCALE ANALYSIS]</scope>
    <source>
        <strain>cv. Columbia</strain>
    </source>
</reference>
<reference key="7">
    <citation type="journal article" date="2013" name="Plant Cell">
        <title>Loss of plastoglobule kinases ABC1K1 and ABC1K3 causes conditional degreening, modified prenyl-lipids, and recruitment of the jasmonic acid pathway.</title>
        <authorList>
            <person name="Lundquist P.K."/>
            <person name="Poliakov A."/>
            <person name="Giacomelli L."/>
            <person name="Friso G."/>
            <person name="Appel M."/>
            <person name="McQuinn R.P."/>
            <person name="Krasnoff S.B."/>
            <person name="Rowland E."/>
            <person name="Ponnala L."/>
            <person name="Sun Q."/>
            <person name="van Wijk K.J."/>
        </authorList>
    </citation>
    <scope>FUNCTION</scope>
    <scope>DISRUPTION PHENOTYPE</scope>
    <scope>INTERACTION WITH ABC1K3</scope>
    <source>
        <strain>cv. Columbia</strain>
    </source>
</reference>
<reference key="8">
    <citation type="journal article" date="2014" name="Plant J.">
        <title>ABC1K1/PGR6 kinase: a regulatory link between photosynthetic activity and chloroplast metabolism.</title>
        <authorList>
            <person name="Martinis J."/>
            <person name="Glauser G."/>
            <person name="Valimareanu S."/>
            <person name="Stettler M."/>
            <person name="Zeeman S.C."/>
            <person name="Yamamoto H."/>
            <person name="Shikanai T."/>
            <person name="Kessler F."/>
        </authorList>
    </citation>
    <scope>FUNCTION</scope>
    <scope>DISRUPTION PHENOTYPE</scope>
    <scope>CATALYTIC ACTIVITY</scope>
    <source>
        <strain>cv. Columbia</strain>
    </source>
</reference>
<reference key="9">
    <citation type="journal article" date="2015" name="Mol. Plant">
        <title>Arabidopsis atypical kinases ABC1K1 and ABC1K3 act oppositely to cope with photodamage under red light.</title>
        <authorList>
            <person name="Huang H."/>
            <person name="Yang M."/>
            <person name="Su Y."/>
            <person name="Qu L."/>
            <person name="Deng X.W."/>
        </authorList>
    </citation>
    <scope>FUNCTION</scope>
    <scope>DISRUPTION PHENOTYPE</scope>
    <source>
        <strain>cv. Columbia</strain>
    </source>
</reference>
<feature type="transit peptide" description="Chloroplast" evidence="1">
    <location>
        <begin position="1"/>
        <end position="79"/>
    </location>
</feature>
<feature type="chain" id="PRO_0000286524" description="Protein ACTIVITY OF BC1 COMPLEX KINASE 1, chloroplastic">
    <location>
        <begin position="80"/>
        <end position="682"/>
    </location>
</feature>
<feature type="domain" description="Protein kinase" evidence="2">
    <location>
        <begin position="236"/>
        <end position="567"/>
    </location>
</feature>
<feature type="active site" description="Proton acceptor" evidence="2">
    <location>
        <position position="400"/>
    </location>
</feature>
<feature type="binding site" evidence="2">
    <location>
        <begin position="242"/>
        <end position="250"/>
    </location>
    <ligand>
        <name>ATP</name>
        <dbReference type="ChEBI" id="CHEBI:30616"/>
    </ligand>
</feature>
<feature type="binding site" evidence="2">
    <location>
        <position position="265"/>
    </location>
    <ligand>
        <name>ATP</name>
        <dbReference type="ChEBI" id="CHEBI:30616"/>
    </ligand>
</feature>
<feature type="splice variant" id="VSP_025072" description="In isoform 2." evidence="13">
    <location>
        <begin position="321"/>
        <end position="345"/>
    </location>
</feature>
<comment type="function">
    <text evidence="5 6 7 8">Kinase that can phosphorylate the tocopherol cyclase VTE1, a key enzyme of tocopherol (vitamin E) metabolism and involved in the recycling of oxidated alpha-tocopherol quinone, possibly stabilizing it at plastoglobules. Also regulates plastoglobule protein composition (PubMed:24267661). Prevents photodamage of chloroplasts under continuous red light, thus working in opposition to ABC1K3 (PubMed:25882344). Together with ABC1K1, contributes to plastoglobule (PG) function in prenyl-lipid metabolism, stress response, and thylakoid remodeling (PubMed:23673981, PubMed:24267661). Involved in chlorophyll degradation and in the maintenance of the number of chlorophyll-binding photosynthetic thylakoid membranes (PubMed:22447966). Ensures photosynthetic electron transport by regulating the homeostasis of plastoquinone, beta-carotene and xanthophyll lutein, as well as membrane antioxidant tocopherol metabolism (PubMed:24267661). Seems to affect specifically stability or turnover of D1 protein, product of psbA, one of the four core subunits of the photosystem II (PSII) (PubMed:25882344). Required for photooxidative stress responses, including the induction of oxidative stress response genes (e.g. FSD1, CSD1, CAT1, and UTG71C1), to prevent photosystem II core and chlorophyll degradations (PubMed:22447966, PubMed:23673981, PubMed:24267661).</text>
</comment>
<comment type="catalytic activity">
    <reaction evidence="7">
        <text>L-seryl-[protein] + ATP = O-phospho-L-seryl-[protein] + ADP + H(+)</text>
        <dbReference type="Rhea" id="RHEA:17989"/>
        <dbReference type="Rhea" id="RHEA-COMP:9863"/>
        <dbReference type="Rhea" id="RHEA-COMP:11604"/>
        <dbReference type="ChEBI" id="CHEBI:15378"/>
        <dbReference type="ChEBI" id="CHEBI:29999"/>
        <dbReference type="ChEBI" id="CHEBI:30616"/>
        <dbReference type="ChEBI" id="CHEBI:83421"/>
        <dbReference type="ChEBI" id="CHEBI:456216"/>
        <dbReference type="EC" id="2.7.11.1"/>
    </reaction>
</comment>
<comment type="catalytic activity">
    <reaction evidence="7">
        <text>L-threonyl-[protein] + ATP = O-phospho-L-threonyl-[protein] + ADP + H(+)</text>
        <dbReference type="Rhea" id="RHEA:46608"/>
        <dbReference type="Rhea" id="RHEA-COMP:11060"/>
        <dbReference type="Rhea" id="RHEA-COMP:11605"/>
        <dbReference type="ChEBI" id="CHEBI:15378"/>
        <dbReference type="ChEBI" id="CHEBI:30013"/>
        <dbReference type="ChEBI" id="CHEBI:30616"/>
        <dbReference type="ChEBI" id="CHEBI:61977"/>
        <dbReference type="ChEBI" id="CHEBI:456216"/>
        <dbReference type="EC" id="2.7.11.1"/>
    </reaction>
</comment>
<comment type="subunit">
    <text evidence="6">Interacts with ABC1K3 in plastoglobules (PG).</text>
</comment>
<comment type="subcellular location">
    <subcellularLocation>
        <location evidence="3 4">Plastid</location>
        <location evidence="3 4">Chloroplast</location>
        <location evidence="3 4">Plastoglobule</location>
    </subcellularLocation>
    <subcellularLocation>
        <location evidence="5">Plastid</location>
        <location evidence="5">Chloroplast</location>
    </subcellularLocation>
</comment>
<comment type="alternative products">
    <event type="alternative splicing"/>
    <isoform>
        <id>Q8RWG1-1</id>
        <name>1</name>
        <sequence type="displayed"/>
    </isoform>
    <isoform>
        <id>Q8RWG1-2</id>
        <name>2</name>
        <sequence type="described" ref="VSP_025072"/>
    </isoform>
</comment>
<comment type="tissue specificity">
    <text evidence="5">Expressed in all tissues (e.g. especially in leaves) at all developmental stages from seed germination to flowering, except in the root tips.</text>
</comment>
<comment type="induction">
    <text evidence="5">Up-regulated by methyl viologen (paraquat, MV) treatment, a herbicide triggering photooxidative stress.</text>
</comment>
<comment type="disruption phenotype">
    <text evidence="5 6 7 8">High chlorophyll fluorescence and reduced non-photochemical quenching (NPQ) caused by defects in photosynthetic electron transport. Specifically deficient in the electron carrier plastoquinone, as well as in beta-carotene and the xanthophyll lutein, and defective in membrane antioxidant tocopherol metabolism. Altered plastoglobule protein composition (PubMed:24267661). Abnormal development with albino cotyledons and paler mesophyll cells leading to yellow-green leaves due to reduced contents of carotenoids and chlorophyll, as well as changes in the numbers of chlorophyll-binding proteins of the photosynthetic complexes (PubMed:22447966, PubMed:24267661, PubMed:25882344). In bdr1-1 and bdr1-2, increased accumulation of anthocyanin under red and blue light conditions. Exposure to red light for 5 days leads to dwarf plants with pale green rosette leaves. Reduced level of D1 protein, product of psbA, one of the four core subunits of the photosystem II (PSII) (PubMed:25882344). Increased levels of chlorophyll degradation products such as chlorophyllide (Chlide) a and pheophorbide a. Stronger photosynthetic and metabolic perturbations in response to high light stress and methyl viologen (paraquat, MV), a herbicide triggering photooxidative stress, strongly affecting carbohydrate metabolism (PubMed:22447966, PubMed:24267661). However, the mutant acclimates to high light after 7 days together with a recovery of carotenoid levels and a drastic alteration in the starch-to-sucrose ratio (PubMed:24267661). Lower transcript levels of the oxidative stress response genes FSD1, CSD1, CAT1, and UTG71C1 after MV treatment (PubMed:22447966). Conditional light stress phenotype in the double mutant abc1k1 abc1k3 that displays rapid chlorosis upon high light stress and slower, but irreversible, senescence-like phenotype during moderate light stress, drought or nitrogen limitation, but not cold stress. This senescence-like phenotype is associated with the degradation of the photosystem II core and up-regulation of chlorophyll degradation. Modified prenyl-lipid composition in plastoglobules (PG) probably due to reduced VTE1 activity and loss of CCD4. Abnormal recruitment of plastid jasmonate biosynthesis enzymes in PG (PubMed:23673981).</text>
</comment>
<comment type="similarity">
    <text evidence="13">Belongs to the protein kinase superfamily. ADCK protein kinase family.</text>
</comment>
<comment type="sequence caution" evidence="13">
    <conflict type="erroneous gene model prediction">
        <sequence resource="EMBL-CDS" id="CAA16542"/>
    </conflict>
</comment>
<comment type="sequence caution" evidence="13">
    <conflict type="erroneous gene model prediction">
        <sequence resource="EMBL-CDS" id="CAB79857"/>
    </conflict>
</comment>
<evidence type="ECO:0000255" key="1"/>
<evidence type="ECO:0000255" key="2">
    <source>
        <dbReference type="PROSITE-ProRule" id="PRU00159"/>
    </source>
</evidence>
<evidence type="ECO:0000269" key="3">
    <source>
    </source>
</evidence>
<evidence type="ECO:0000269" key="4">
    <source>
    </source>
</evidence>
<evidence type="ECO:0000269" key="5">
    <source>
    </source>
</evidence>
<evidence type="ECO:0000269" key="6">
    <source>
    </source>
</evidence>
<evidence type="ECO:0000269" key="7">
    <source>
    </source>
</evidence>
<evidence type="ECO:0000269" key="8">
    <source>
    </source>
</evidence>
<evidence type="ECO:0000303" key="9">
    <source>
    </source>
</evidence>
<evidence type="ECO:0000303" key="10">
    <source>
    </source>
</evidence>
<evidence type="ECO:0000303" key="11">
    <source>
    </source>
</evidence>
<evidence type="ECO:0000303" key="12">
    <source>
    </source>
</evidence>
<evidence type="ECO:0000305" key="13"/>
<evidence type="ECO:0000312" key="14">
    <source>
        <dbReference type="Araport" id="AT4G31390"/>
    </source>
</evidence>
<evidence type="ECO:0000312" key="15">
    <source>
        <dbReference type="EMBL" id="CAB79857.1"/>
    </source>
</evidence>